<accession>A4YVG6</accession>
<gene>
    <name evidence="1" type="primary">rpsB</name>
    <name type="ordered locus">BRADO4140</name>
</gene>
<reference key="1">
    <citation type="journal article" date="2007" name="Science">
        <title>Legumes symbioses: absence of nod genes in photosynthetic bradyrhizobia.</title>
        <authorList>
            <person name="Giraud E."/>
            <person name="Moulin L."/>
            <person name="Vallenet D."/>
            <person name="Barbe V."/>
            <person name="Cytryn E."/>
            <person name="Avarre J.-C."/>
            <person name="Jaubert M."/>
            <person name="Simon D."/>
            <person name="Cartieaux F."/>
            <person name="Prin Y."/>
            <person name="Bena G."/>
            <person name="Hannibal L."/>
            <person name="Fardoux J."/>
            <person name="Kojadinovic M."/>
            <person name="Vuillet L."/>
            <person name="Lajus A."/>
            <person name="Cruveiller S."/>
            <person name="Rouy Z."/>
            <person name="Mangenot S."/>
            <person name="Segurens B."/>
            <person name="Dossat C."/>
            <person name="Franck W.L."/>
            <person name="Chang W.-S."/>
            <person name="Saunders E."/>
            <person name="Bruce D."/>
            <person name="Richardson P."/>
            <person name="Normand P."/>
            <person name="Dreyfus B."/>
            <person name="Pignol D."/>
            <person name="Stacey G."/>
            <person name="Emerich D."/>
            <person name="Vermeglio A."/>
            <person name="Medigue C."/>
            <person name="Sadowsky M."/>
        </authorList>
    </citation>
    <scope>NUCLEOTIDE SEQUENCE [LARGE SCALE GENOMIC DNA]</scope>
    <source>
        <strain>ORS 278</strain>
    </source>
</reference>
<evidence type="ECO:0000255" key="1">
    <source>
        <dbReference type="HAMAP-Rule" id="MF_00291"/>
    </source>
</evidence>
<evidence type="ECO:0000305" key="2"/>
<comment type="similarity">
    <text evidence="1">Belongs to the universal ribosomal protein uS2 family.</text>
</comment>
<dbReference type="EMBL" id="CU234118">
    <property type="protein sequence ID" value="CAL77892.1"/>
    <property type="molecule type" value="Genomic_DNA"/>
</dbReference>
<dbReference type="RefSeq" id="WP_011927020.1">
    <property type="nucleotide sequence ID" value="NC_009445.1"/>
</dbReference>
<dbReference type="SMR" id="A4YVG6"/>
<dbReference type="STRING" id="114615.BRADO4140"/>
<dbReference type="KEGG" id="bra:BRADO4140"/>
<dbReference type="eggNOG" id="COG0052">
    <property type="taxonomic scope" value="Bacteria"/>
</dbReference>
<dbReference type="HOGENOM" id="CLU_040318_2_1_5"/>
<dbReference type="OrthoDB" id="9808036at2"/>
<dbReference type="Proteomes" id="UP000001994">
    <property type="component" value="Chromosome"/>
</dbReference>
<dbReference type="GO" id="GO:0022627">
    <property type="term" value="C:cytosolic small ribosomal subunit"/>
    <property type="evidence" value="ECO:0007669"/>
    <property type="project" value="TreeGrafter"/>
</dbReference>
<dbReference type="GO" id="GO:0003735">
    <property type="term" value="F:structural constituent of ribosome"/>
    <property type="evidence" value="ECO:0007669"/>
    <property type="project" value="InterPro"/>
</dbReference>
<dbReference type="GO" id="GO:0006412">
    <property type="term" value="P:translation"/>
    <property type="evidence" value="ECO:0007669"/>
    <property type="project" value="UniProtKB-UniRule"/>
</dbReference>
<dbReference type="CDD" id="cd01425">
    <property type="entry name" value="RPS2"/>
    <property type="match status" value="1"/>
</dbReference>
<dbReference type="FunFam" id="1.10.287.610:FF:000004">
    <property type="entry name" value="30S ribosomal protein S2"/>
    <property type="match status" value="1"/>
</dbReference>
<dbReference type="Gene3D" id="3.40.50.10490">
    <property type="entry name" value="Glucose-6-phosphate isomerase like protein, domain 1"/>
    <property type="match status" value="1"/>
</dbReference>
<dbReference type="Gene3D" id="1.10.287.610">
    <property type="entry name" value="Helix hairpin bin"/>
    <property type="match status" value="1"/>
</dbReference>
<dbReference type="HAMAP" id="MF_00291_B">
    <property type="entry name" value="Ribosomal_uS2_B"/>
    <property type="match status" value="1"/>
</dbReference>
<dbReference type="InterPro" id="IPR001865">
    <property type="entry name" value="Ribosomal_uS2"/>
</dbReference>
<dbReference type="InterPro" id="IPR005706">
    <property type="entry name" value="Ribosomal_uS2_bac/mit/plastid"/>
</dbReference>
<dbReference type="InterPro" id="IPR018130">
    <property type="entry name" value="Ribosomal_uS2_CS"/>
</dbReference>
<dbReference type="InterPro" id="IPR023591">
    <property type="entry name" value="Ribosomal_uS2_flav_dom_sf"/>
</dbReference>
<dbReference type="NCBIfam" id="NF008966">
    <property type="entry name" value="PRK12311.1"/>
    <property type="match status" value="1"/>
</dbReference>
<dbReference type="NCBIfam" id="TIGR01011">
    <property type="entry name" value="rpsB_bact"/>
    <property type="match status" value="1"/>
</dbReference>
<dbReference type="PANTHER" id="PTHR12534">
    <property type="entry name" value="30S RIBOSOMAL PROTEIN S2 PROKARYOTIC AND ORGANELLAR"/>
    <property type="match status" value="1"/>
</dbReference>
<dbReference type="PANTHER" id="PTHR12534:SF0">
    <property type="entry name" value="SMALL RIBOSOMAL SUBUNIT PROTEIN US2M"/>
    <property type="match status" value="1"/>
</dbReference>
<dbReference type="Pfam" id="PF00318">
    <property type="entry name" value="Ribosomal_S2"/>
    <property type="match status" value="1"/>
</dbReference>
<dbReference type="PRINTS" id="PR00395">
    <property type="entry name" value="RIBOSOMALS2"/>
</dbReference>
<dbReference type="SUPFAM" id="SSF52313">
    <property type="entry name" value="Ribosomal protein S2"/>
    <property type="match status" value="1"/>
</dbReference>
<dbReference type="PROSITE" id="PS00962">
    <property type="entry name" value="RIBOSOMAL_S2_1"/>
    <property type="match status" value="1"/>
</dbReference>
<dbReference type="PROSITE" id="PS00963">
    <property type="entry name" value="RIBOSOMAL_S2_2"/>
    <property type="match status" value="1"/>
</dbReference>
<name>RS2_BRASO</name>
<proteinExistence type="inferred from homology"/>
<keyword id="KW-1185">Reference proteome</keyword>
<keyword id="KW-0687">Ribonucleoprotein</keyword>
<keyword id="KW-0689">Ribosomal protein</keyword>
<protein>
    <recommendedName>
        <fullName evidence="1">Small ribosomal subunit protein uS2</fullName>
    </recommendedName>
    <alternativeName>
        <fullName evidence="2">30S ribosomal protein S2</fullName>
    </alternativeName>
</protein>
<sequence length="329" mass="35668">MALPEFTMRQLLEAGVHFGHQSHRWNPKMADYIFGARNNIHIIDLAQTVPLLHTALQAVSDTVAKGGRILFVGTKRQAQDNVADAAKRCAQYFVNSRWLGGTLTNWKTISASIKRLRHLDEVLSSGEANSYTKKERLTLQRERDKLDRSLGGIKDMGGLPDMIFVIDTNKEDIAIQEAQRLNIPVAAIVDTNCDPKGITYVVPGNDDAGRAISLYCDLIARAAIDGISRAQGELGIDVGASAAPLEEDLPAASASTFQGLPGPRGTADDLKKLTGVSGAIEKKLNDLGIFHFWQLAELNHDTAHQIGEEVGLPSRADAWVAQAKSLADA</sequence>
<organism>
    <name type="scientific">Bradyrhizobium sp. (strain ORS 278)</name>
    <dbReference type="NCBI Taxonomy" id="114615"/>
    <lineage>
        <taxon>Bacteria</taxon>
        <taxon>Pseudomonadati</taxon>
        <taxon>Pseudomonadota</taxon>
        <taxon>Alphaproteobacteria</taxon>
        <taxon>Hyphomicrobiales</taxon>
        <taxon>Nitrobacteraceae</taxon>
        <taxon>Bradyrhizobium</taxon>
    </lineage>
</organism>
<feature type="chain" id="PRO_1000003902" description="Small ribosomal subunit protein uS2">
    <location>
        <begin position="1"/>
        <end position="329"/>
    </location>
</feature>